<organism>
    <name type="scientific">Yersinia pestis bv. Antiqua (strain Antiqua)</name>
    <dbReference type="NCBI Taxonomy" id="360102"/>
    <lineage>
        <taxon>Bacteria</taxon>
        <taxon>Pseudomonadati</taxon>
        <taxon>Pseudomonadota</taxon>
        <taxon>Gammaproteobacteria</taxon>
        <taxon>Enterobacterales</taxon>
        <taxon>Yersiniaceae</taxon>
        <taxon>Yersinia</taxon>
    </lineage>
</organism>
<dbReference type="EC" id="2.5.1.75" evidence="1"/>
<dbReference type="EMBL" id="CP000308">
    <property type="protein sequence ID" value="ABG15873.1"/>
    <property type="molecule type" value="Genomic_DNA"/>
</dbReference>
<dbReference type="RefSeq" id="WP_002209149.1">
    <property type="nucleotide sequence ID" value="NZ_CP009906.1"/>
</dbReference>
<dbReference type="SMR" id="Q1C0Z9"/>
<dbReference type="GeneID" id="57974235"/>
<dbReference type="KEGG" id="ypa:YPA_3912"/>
<dbReference type="Proteomes" id="UP000001971">
    <property type="component" value="Chromosome"/>
</dbReference>
<dbReference type="GO" id="GO:0005524">
    <property type="term" value="F:ATP binding"/>
    <property type="evidence" value="ECO:0007669"/>
    <property type="project" value="UniProtKB-UniRule"/>
</dbReference>
<dbReference type="GO" id="GO:0052381">
    <property type="term" value="F:tRNA dimethylallyltransferase activity"/>
    <property type="evidence" value="ECO:0007669"/>
    <property type="project" value="UniProtKB-UniRule"/>
</dbReference>
<dbReference type="GO" id="GO:0006400">
    <property type="term" value="P:tRNA modification"/>
    <property type="evidence" value="ECO:0007669"/>
    <property type="project" value="TreeGrafter"/>
</dbReference>
<dbReference type="FunFam" id="1.10.20.140:FF:000001">
    <property type="entry name" value="tRNA dimethylallyltransferase"/>
    <property type="match status" value="1"/>
</dbReference>
<dbReference type="Gene3D" id="1.10.20.140">
    <property type="match status" value="1"/>
</dbReference>
<dbReference type="Gene3D" id="3.40.50.300">
    <property type="entry name" value="P-loop containing nucleotide triphosphate hydrolases"/>
    <property type="match status" value="1"/>
</dbReference>
<dbReference type="HAMAP" id="MF_00185">
    <property type="entry name" value="IPP_trans"/>
    <property type="match status" value="1"/>
</dbReference>
<dbReference type="InterPro" id="IPR039657">
    <property type="entry name" value="Dimethylallyltransferase"/>
</dbReference>
<dbReference type="InterPro" id="IPR018022">
    <property type="entry name" value="IPT"/>
</dbReference>
<dbReference type="InterPro" id="IPR027417">
    <property type="entry name" value="P-loop_NTPase"/>
</dbReference>
<dbReference type="NCBIfam" id="TIGR00174">
    <property type="entry name" value="miaA"/>
    <property type="match status" value="1"/>
</dbReference>
<dbReference type="PANTHER" id="PTHR11088">
    <property type="entry name" value="TRNA DIMETHYLALLYLTRANSFERASE"/>
    <property type="match status" value="1"/>
</dbReference>
<dbReference type="PANTHER" id="PTHR11088:SF60">
    <property type="entry name" value="TRNA DIMETHYLALLYLTRANSFERASE"/>
    <property type="match status" value="1"/>
</dbReference>
<dbReference type="Pfam" id="PF01715">
    <property type="entry name" value="IPPT"/>
    <property type="match status" value="1"/>
</dbReference>
<dbReference type="SUPFAM" id="SSF52540">
    <property type="entry name" value="P-loop containing nucleoside triphosphate hydrolases"/>
    <property type="match status" value="1"/>
</dbReference>
<name>MIAA_YERPA</name>
<sequence>MNDIENLDRPPAIFIMGPTASGKTALSIALRQRLPVELVSVDSALIYRGMDIGTAKPSAQELALAPHRLIDIRDPAESYSAADFRKDALKEMADITAAGRIPLLVGGTMLYFKALLDGLSPLPSADPQVRQRIEQQASELGWGALHQQLAVIDPVAAARIHPNDPQRLSRALEVFFISGKTLTELTKISGETLPYRVHQFAIAPASRELLHQRIELRFHQMLDAGFEAEARVLFDRGDLHTDLPAIRCVGYRQMWSYLSGEIDYNDMVYRGVCATRQLAKRQMTWLRGWSSVQWLDSDKPGEALDSVIQVVSA</sequence>
<keyword id="KW-0067">ATP-binding</keyword>
<keyword id="KW-0460">Magnesium</keyword>
<keyword id="KW-0547">Nucleotide-binding</keyword>
<keyword id="KW-0808">Transferase</keyword>
<keyword id="KW-0819">tRNA processing</keyword>
<accession>Q1C0Z9</accession>
<feature type="chain" id="PRO_1000020688" description="tRNA dimethylallyltransferase">
    <location>
        <begin position="1"/>
        <end position="313"/>
    </location>
</feature>
<feature type="region of interest" description="Interaction with substrate tRNA" evidence="1">
    <location>
        <begin position="42"/>
        <end position="45"/>
    </location>
</feature>
<feature type="region of interest" description="Interaction with substrate tRNA" evidence="1">
    <location>
        <begin position="166"/>
        <end position="170"/>
    </location>
</feature>
<feature type="region of interest" description="Interaction with substrate tRNA" evidence="1">
    <location>
        <begin position="247"/>
        <end position="252"/>
    </location>
</feature>
<feature type="binding site" evidence="1">
    <location>
        <begin position="17"/>
        <end position="24"/>
    </location>
    <ligand>
        <name>ATP</name>
        <dbReference type="ChEBI" id="CHEBI:30616"/>
    </ligand>
</feature>
<feature type="binding site" evidence="1">
    <location>
        <begin position="19"/>
        <end position="24"/>
    </location>
    <ligand>
        <name>substrate</name>
    </ligand>
</feature>
<feature type="site" description="Interaction with substrate tRNA" evidence="1">
    <location>
        <position position="108"/>
    </location>
</feature>
<feature type="site" description="Interaction with substrate tRNA" evidence="1">
    <location>
        <position position="130"/>
    </location>
</feature>
<protein>
    <recommendedName>
        <fullName evidence="1">tRNA dimethylallyltransferase</fullName>
        <ecNumber evidence="1">2.5.1.75</ecNumber>
    </recommendedName>
    <alternativeName>
        <fullName evidence="1">Dimethylallyl diphosphate:tRNA dimethylallyltransferase</fullName>
        <shortName evidence="1">DMAPP:tRNA dimethylallyltransferase</shortName>
        <shortName evidence="1">DMATase</shortName>
    </alternativeName>
    <alternativeName>
        <fullName evidence="1">Isopentenyl-diphosphate:tRNA isopentenyltransferase</fullName>
        <shortName evidence="1">IPP transferase</shortName>
        <shortName evidence="1">IPPT</shortName>
        <shortName evidence="1">IPTase</shortName>
    </alternativeName>
</protein>
<reference key="1">
    <citation type="journal article" date="2006" name="J. Bacteriol.">
        <title>Complete genome sequence of Yersinia pestis strains Antiqua and Nepal516: evidence of gene reduction in an emerging pathogen.</title>
        <authorList>
            <person name="Chain P.S.G."/>
            <person name="Hu P."/>
            <person name="Malfatti S.A."/>
            <person name="Radnedge L."/>
            <person name="Larimer F."/>
            <person name="Vergez L.M."/>
            <person name="Worsham P."/>
            <person name="Chu M.C."/>
            <person name="Andersen G.L."/>
        </authorList>
    </citation>
    <scope>NUCLEOTIDE SEQUENCE [LARGE SCALE GENOMIC DNA]</scope>
    <source>
        <strain>Antiqua</strain>
    </source>
</reference>
<proteinExistence type="inferred from homology"/>
<comment type="function">
    <text evidence="1">Catalyzes the transfer of a dimethylallyl group onto the adenine at position 37 in tRNAs that read codons beginning with uridine, leading to the formation of N6-(dimethylallyl)adenosine (i(6)A).</text>
</comment>
<comment type="catalytic activity">
    <reaction evidence="1">
        <text>adenosine(37) in tRNA + dimethylallyl diphosphate = N(6)-dimethylallyladenosine(37) in tRNA + diphosphate</text>
        <dbReference type="Rhea" id="RHEA:26482"/>
        <dbReference type="Rhea" id="RHEA-COMP:10162"/>
        <dbReference type="Rhea" id="RHEA-COMP:10375"/>
        <dbReference type="ChEBI" id="CHEBI:33019"/>
        <dbReference type="ChEBI" id="CHEBI:57623"/>
        <dbReference type="ChEBI" id="CHEBI:74411"/>
        <dbReference type="ChEBI" id="CHEBI:74415"/>
        <dbReference type="EC" id="2.5.1.75"/>
    </reaction>
</comment>
<comment type="cofactor">
    <cofactor evidence="1">
        <name>Mg(2+)</name>
        <dbReference type="ChEBI" id="CHEBI:18420"/>
    </cofactor>
</comment>
<comment type="subunit">
    <text evidence="1">Monomer.</text>
</comment>
<comment type="similarity">
    <text evidence="1">Belongs to the IPP transferase family.</text>
</comment>
<gene>
    <name evidence="1" type="primary">miaA</name>
    <name type="ordered locus">YPA_3912</name>
</gene>
<evidence type="ECO:0000255" key="1">
    <source>
        <dbReference type="HAMAP-Rule" id="MF_00185"/>
    </source>
</evidence>